<sequence length="186" mass="20925">MSRLSIFPDETAANAPDGLVPQLESNDPAVIQASLSRRGIGFEQWPAEHGLPEGADQATILQAYADAIAWVQRDGGYFTVDAIRMTPNHPDREPLRRKFLEEHTHAEDEVRFFVEGCGLFVLHIGSEVLSVLCERGDLMRVPAGTRHWFDMGSQPRFCAVRWFNNPEGWVAQYTGSSISQRFPRLD</sequence>
<dbReference type="EC" id="1.13.11.54" evidence="1"/>
<dbReference type="EC" id="1.13.11.53" evidence="1"/>
<dbReference type="EMBL" id="CP000110">
    <property type="protein sequence ID" value="ABB35762.1"/>
    <property type="molecule type" value="Genomic_DNA"/>
</dbReference>
<dbReference type="RefSeq" id="WP_011364970.1">
    <property type="nucleotide sequence ID" value="NC_007516.1"/>
</dbReference>
<dbReference type="SMR" id="Q3AI20"/>
<dbReference type="STRING" id="110662.Syncc9605_2021"/>
<dbReference type="KEGG" id="syd:Syncc9605_2021"/>
<dbReference type="eggNOG" id="COG1791">
    <property type="taxonomic scope" value="Bacteria"/>
</dbReference>
<dbReference type="HOGENOM" id="CLU_125400_0_0_3"/>
<dbReference type="OrthoDB" id="9795636at2"/>
<dbReference type="UniPathway" id="UPA00904">
    <property type="reaction ID" value="UER00878"/>
</dbReference>
<dbReference type="GO" id="GO:0010308">
    <property type="term" value="F:acireductone dioxygenase (Ni2+-requiring) activity"/>
    <property type="evidence" value="ECO:0007669"/>
    <property type="project" value="UniProtKB-UniRule"/>
</dbReference>
<dbReference type="GO" id="GO:0010309">
    <property type="term" value="F:acireductone dioxygenase [iron(II)-requiring] activity"/>
    <property type="evidence" value="ECO:0007669"/>
    <property type="project" value="UniProtKB-UniRule"/>
</dbReference>
<dbReference type="GO" id="GO:0005506">
    <property type="term" value="F:iron ion binding"/>
    <property type="evidence" value="ECO:0007669"/>
    <property type="project" value="UniProtKB-UniRule"/>
</dbReference>
<dbReference type="GO" id="GO:0016151">
    <property type="term" value="F:nickel cation binding"/>
    <property type="evidence" value="ECO:0007669"/>
    <property type="project" value="UniProtKB-UniRule"/>
</dbReference>
<dbReference type="GO" id="GO:0019509">
    <property type="term" value="P:L-methionine salvage from methylthioadenosine"/>
    <property type="evidence" value="ECO:0007669"/>
    <property type="project" value="UniProtKB-UniRule"/>
</dbReference>
<dbReference type="GO" id="GO:0019284">
    <property type="term" value="P:L-methionine salvage from S-adenosylmethionine"/>
    <property type="evidence" value="ECO:0007669"/>
    <property type="project" value="InterPro"/>
</dbReference>
<dbReference type="CDD" id="cd02232">
    <property type="entry name" value="cupin_ARD"/>
    <property type="match status" value="1"/>
</dbReference>
<dbReference type="Gene3D" id="2.60.120.10">
    <property type="entry name" value="Jelly Rolls"/>
    <property type="match status" value="1"/>
</dbReference>
<dbReference type="HAMAP" id="MF_01682">
    <property type="entry name" value="Salvage_MtnD"/>
    <property type="match status" value="1"/>
</dbReference>
<dbReference type="InterPro" id="IPR004313">
    <property type="entry name" value="ARD"/>
</dbReference>
<dbReference type="InterPro" id="IPR023956">
    <property type="entry name" value="ARD_bac"/>
</dbReference>
<dbReference type="InterPro" id="IPR014710">
    <property type="entry name" value="RmlC-like_jellyroll"/>
</dbReference>
<dbReference type="InterPro" id="IPR011051">
    <property type="entry name" value="RmlC_Cupin_sf"/>
</dbReference>
<dbReference type="PANTHER" id="PTHR23418">
    <property type="entry name" value="ACIREDUCTONE DIOXYGENASE"/>
    <property type="match status" value="1"/>
</dbReference>
<dbReference type="PANTHER" id="PTHR23418:SF0">
    <property type="entry name" value="ACIREDUCTONE DIOXYGENASE"/>
    <property type="match status" value="1"/>
</dbReference>
<dbReference type="Pfam" id="PF03079">
    <property type="entry name" value="ARD"/>
    <property type="match status" value="1"/>
</dbReference>
<dbReference type="SUPFAM" id="SSF51182">
    <property type="entry name" value="RmlC-like cupins"/>
    <property type="match status" value="1"/>
</dbReference>
<organism>
    <name type="scientific">Synechococcus sp. (strain CC9605)</name>
    <dbReference type="NCBI Taxonomy" id="110662"/>
    <lineage>
        <taxon>Bacteria</taxon>
        <taxon>Bacillati</taxon>
        <taxon>Cyanobacteriota</taxon>
        <taxon>Cyanophyceae</taxon>
        <taxon>Synechococcales</taxon>
        <taxon>Synechococcaceae</taxon>
        <taxon>Synechococcus</taxon>
    </lineage>
</organism>
<name>MTND_SYNSC</name>
<accession>Q3AI20</accession>
<feature type="chain" id="PRO_0000359240" description="Acireductone dioxygenase">
    <location>
        <begin position="1"/>
        <end position="186"/>
    </location>
</feature>
<feature type="binding site" evidence="1">
    <location>
        <position position="103"/>
    </location>
    <ligand>
        <name>Fe(2+)</name>
        <dbReference type="ChEBI" id="CHEBI:29033"/>
    </ligand>
</feature>
<feature type="binding site" evidence="1">
    <location>
        <position position="103"/>
    </location>
    <ligand>
        <name>Ni(2+)</name>
        <dbReference type="ChEBI" id="CHEBI:49786"/>
    </ligand>
</feature>
<feature type="binding site" evidence="1">
    <location>
        <position position="105"/>
    </location>
    <ligand>
        <name>Fe(2+)</name>
        <dbReference type="ChEBI" id="CHEBI:29033"/>
    </ligand>
</feature>
<feature type="binding site" evidence="1">
    <location>
        <position position="105"/>
    </location>
    <ligand>
        <name>Ni(2+)</name>
        <dbReference type="ChEBI" id="CHEBI:49786"/>
    </ligand>
</feature>
<feature type="binding site" evidence="1">
    <location>
        <position position="109"/>
    </location>
    <ligand>
        <name>Fe(2+)</name>
        <dbReference type="ChEBI" id="CHEBI:29033"/>
    </ligand>
</feature>
<feature type="binding site" evidence="1">
    <location>
        <position position="109"/>
    </location>
    <ligand>
        <name>Ni(2+)</name>
        <dbReference type="ChEBI" id="CHEBI:49786"/>
    </ligand>
</feature>
<feature type="binding site" evidence="1">
    <location>
        <position position="147"/>
    </location>
    <ligand>
        <name>Fe(2+)</name>
        <dbReference type="ChEBI" id="CHEBI:29033"/>
    </ligand>
</feature>
<feature type="binding site" evidence="1">
    <location>
        <position position="147"/>
    </location>
    <ligand>
        <name>Ni(2+)</name>
        <dbReference type="ChEBI" id="CHEBI:49786"/>
    </ligand>
</feature>
<feature type="site" description="May play a role in metal incorporation in vivo" evidence="1">
    <location>
        <position position="102"/>
    </location>
</feature>
<feature type="site" description="May play a role in transmitting local conformational changes" evidence="1">
    <location>
        <position position="108"/>
    </location>
</feature>
<feature type="site" description="Important to generate the dianion" evidence="1">
    <location>
        <position position="111"/>
    </location>
</feature>
<evidence type="ECO:0000255" key="1">
    <source>
        <dbReference type="HAMAP-Rule" id="MF_01682"/>
    </source>
</evidence>
<keyword id="KW-0028">Amino-acid biosynthesis</keyword>
<keyword id="KW-0223">Dioxygenase</keyword>
<keyword id="KW-0408">Iron</keyword>
<keyword id="KW-0479">Metal-binding</keyword>
<keyword id="KW-0486">Methionine biosynthesis</keyword>
<keyword id="KW-0533">Nickel</keyword>
<keyword id="KW-0560">Oxidoreductase</keyword>
<comment type="function">
    <text evidence="1">Catalyzes 2 different reactions between oxygen and the acireductone 1,2-dihydroxy-3-keto-5-methylthiopentene (DHK-MTPene) depending upon the metal bound in the active site. Fe-containing acireductone dioxygenase (Fe-ARD) produces formate and 2-keto-4-methylthiobutyrate (KMTB), the alpha-ketoacid precursor of methionine in the methionine recycle pathway. Ni-containing acireductone dioxygenase (Ni-ARD) produces methylthiopropionate, carbon monoxide and formate, and does not lie on the methionine recycle pathway.</text>
</comment>
<comment type="catalytic activity">
    <reaction evidence="1">
        <text>1,2-dihydroxy-5-(methylsulfanyl)pent-1-en-3-one + O2 = 3-(methylsulfanyl)propanoate + CO + formate + 2 H(+)</text>
        <dbReference type="Rhea" id="RHEA:14161"/>
        <dbReference type="ChEBI" id="CHEBI:15378"/>
        <dbReference type="ChEBI" id="CHEBI:15379"/>
        <dbReference type="ChEBI" id="CHEBI:15740"/>
        <dbReference type="ChEBI" id="CHEBI:17245"/>
        <dbReference type="ChEBI" id="CHEBI:49016"/>
        <dbReference type="ChEBI" id="CHEBI:49252"/>
        <dbReference type="EC" id="1.13.11.53"/>
    </reaction>
</comment>
<comment type="catalytic activity">
    <reaction evidence="1">
        <text>1,2-dihydroxy-5-(methylsulfanyl)pent-1-en-3-one + O2 = 4-methylsulfanyl-2-oxobutanoate + formate + 2 H(+)</text>
        <dbReference type="Rhea" id="RHEA:24504"/>
        <dbReference type="ChEBI" id="CHEBI:15378"/>
        <dbReference type="ChEBI" id="CHEBI:15379"/>
        <dbReference type="ChEBI" id="CHEBI:15740"/>
        <dbReference type="ChEBI" id="CHEBI:16723"/>
        <dbReference type="ChEBI" id="CHEBI:49252"/>
        <dbReference type="EC" id="1.13.11.54"/>
    </reaction>
</comment>
<comment type="cofactor">
    <cofactor evidence="1">
        <name>Fe(2+)</name>
        <dbReference type="ChEBI" id="CHEBI:29033"/>
    </cofactor>
    <text evidence="1">Binds 1 Fe(2+) cation per monomer.</text>
</comment>
<comment type="cofactor">
    <cofactor evidence="1">
        <name>Ni(2+)</name>
        <dbReference type="ChEBI" id="CHEBI:49786"/>
    </cofactor>
    <text evidence="1">Binds 1 nickel ion per monomer.</text>
</comment>
<comment type="pathway">
    <text evidence="1">Amino-acid biosynthesis; L-methionine biosynthesis via salvage pathway; L-methionine from S-methyl-5-thio-alpha-D-ribose 1-phosphate: step 5/6.</text>
</comment>
<comment type="subunit">
    <text evidence="1">Monomer.</text>
</comment>
<comment type="similarity">
    <text evidence="1">Belongs to the acireductone dioxygenase (ARD) family.</text>
</comment>
<gene>
    <name evidence="1" type="primary">mtnD</name>
    <name type="ordered locus">Syncc9605_2021</name>
</gene>
<proteinExistence type="inferred from homology"/>
<protein>
    <recommendedName>
        <fullName evidence="1">Acireductone dioxygenase</fullName>
    </recommendedName>
    <alternativeName>
        <fullName evidence="1">1,2-dihydroxy-3-keto-5-methylthiopentene dioxygenase</fullName>
        <shortName evidence="1">DHK-MTPene dioxygenase</shortName>
    </alternativeName>
    <alternativeName>
        <fullName evidence="1">Acireductone dioxygenase (Fe(2+)-requiring)</fullName>
        <shortName evidence="1">ARD'</shortName>
        <shortName evidence="1">Fe-ARD</shortName>
        <ecNumber evidence="1">1.13.11.54</ecNumber>
    </alternativeName>
    <alternativeName>
        <fullName evidence="1">Acireductone dioxygenase (Ni(2+)-requiring)</fullName>
        <shortName evidence="1">ARD</shortName>
        <shortName evidence="1">Ni-ARD</shortName>
        <ecNumber evidence="1">1.13.11.53</ecNumber>
    </alternativeName>
</protein>
<reference key="1">
    <citation type="submission" date="2005-07" db="EMBL/GenBank/DDBJ databases">
        <title>Complete sequence of Synechococcus sp. CC9605.</title>
        <authorList>
            <consortium name="US DOE Joint Genome Institute"/>
            <person name="Copeland A."/>
            <person name="Lucas S."/>
            <person name="Lapidus A."/>
            <person name="Barry K."/>
            <person name="Detter J.C."/>
            <person name="Glavina T."/>
            <person name="Hammon N."/>
            <person name="Israni S."/>
            <person name="Pitluck S."/>
            <person name="Schmutz J."/>
            <person name="Martinez M."/>
            <person name="Larimer F."/>
            <person name="Land M."/>
            <person name="Kyrpides N."/>
            <person name="Ivanova N."/>
            <person name="Richardson P."/>
        </authorList>
    </citation>
    <scope>NUCLEOTIDE SEQUENCE [LARGE SCALE GENOMIC DNA]</scope>
    <source>
        <strain>CC9605</strain>
    </source>
</reference>